<comment type="function">
    <text evidence="1 2 5 6 7 8 9 10 11 12">Transcription regulator that converts stress signals into a program of gene expression that empowers cells with resistance to the stress induced by a change in their microenvironment. Thereby participates in the regulation of many processes namely cell-cycle, apoptosis, autophagy and DNA repair responses (PubMed:11896600, PubMed:19723804, PubMed:20181828, PubMed:22565310, PubMed:23900510, PubMed:27451286). Controls cell cycle progression and protects cells from genotoxic stress induced by doxorubicin through the complex formation with TP53 and EP300 that binds CDKN1A promoter leading to transcriptional induction of CDKN1A (By similarity). Protects pancreatic cancer cells from stress-induced cell death by binding the RELB promoter and activating its transcription, leading to IER3 transactivation (PubMed:22565310). Negatively regulates apoptosis through interaction with PTMA (By similarity). Inhibits autophagy-induced apoptosis in cardiac cells through FOXO3 interaction, inducing cytoplasmic translocation of FOXO3 thereby preventing the FOXO3 association with the pro-autophagic BNIP3 promoter (PubMed:20181828). Inhibits cell growth and facilitates programmed cell death by apoptosis after adriamycin-induced DNA damage through transactivation of TP53 (PubMed:11896600). Regulates methamphetamine-induced apoptosis and autophagy through DDIT3-mediated endoplasmic reticulum stress pathway (By similarity). Participates in DNA repair following gamma-irradiation by facilitating DNA access of the transcription machinery through interaction with MSL1 leading to inhibition of histone H4' Lys-16' acetylation (H4K16ac) (By similarity). Coactivator of PAX2 transcription factor activity, both by recruiting the EP300 cofactor to increase PAX2 transcription factor activity and by binding PAXIP1 to suppress PAXIP1-induced inhibition on PAX2 (By similarity). Positively regulates cell cycle progression through interaction with COPS5 inducing cytoplasmic translocation of CDKN1B leading to the CDKN1B degradation (By similarity). Coordinates, through its interaction with EP300, the assiociation of MYOD1, EP300 and DDX5 to the MYOG promoter, leading to inhibition of cell-cycle progression and myogenic differentiation promotion (PubMed:19723804). Negatively regulates beta cell proliferation via inhibition of cell-cycle regulatory genes expression through the suppression of their promoter activities (PubMed:23900510). Also required for LHB expression and ovarian maturation (PubMed:18495683). Exacerbates CNS inflammation and demyelination upon cuprizone treatment (PubMed:16374777).</text>
</comment>
<comment type="subunit">
    <text evidence="2 8">Monomer. Directly interacts with MSL1 and binds MORF4L1, two components of histone acetyltransferase complex; the interaction with MORF4L1 may be mediated by MSL1. Interacts with EP300; this interaction enhances the effect of EP300 on PAX2 transcription factor activity. Interacts with PAXIP1; this interaction prevents PAXIP1 inhibition of PAX2 transcription factor activity. Interacts with COPS5; this interaction allows COPS5-dependent CDKN1B nuclear to cytoplasm translocation. Interacts with RNF2. Interacts with FOXO3; this interaction represses FOXO3 transactivation. Interacts with PTMA; regulates apoptotic process (By similarity). Interacts with MYOD1, EP300 and DDX5; this interaction coordinates the association of anti-proliferative and pro-myogenic proteins at the myogenin promoter (PubMed:19723804). Interacts with TP53; interaction is stress-dependent. Forms a complex with EP300 and TP53; this complex binds CDKN1A promoter leading to transcriptional induction of CDKN1A (By similarity).</text>
</comment>
<comment type="subcellular location">
    <subcellularLocation>
        <location evidence="2">Nucleus</location>
    </subcellularLocation>
    <subcellularLocation>
        <location evidence="2">Cytoplasm</location>
    </subcellularLocation>
    <subcellularLocation>
        <location evidence="2">Cytoplasm</location>
        <location evidence="2">Perinuclear region</location>
    </subcellularLocation>
</comment>
<comment type="tissue specificity">
    <text evidence="7">Highly expressed in pancreas and both ovaries and testes.</text>
</comment>
<comment type="developmental stage">
    <text evidence="6">At 14 dpc, highly expressed in brain and the highest level is detected at 16 dpc and 18 dpc. Following birth, levels are barely detectable and stabilize at low levels starting at 20 pnd through adulthood.</text>
</comment>
<comment type="induction">
    <text evidence="5 6 8">Transiently induced in G1 phase (PubMed:19723804). Activated in fibroblasts during growth arrest. Rapidly induced in response to adriamycin-induced apoptosis. Inhibited by TP53 (PubMed:11896600). Up-regulated during cuprizone-induced inflammation and demyelination (PubMed:16374777).</text>
</comment>
<comment type="PTM">
    <text evidence="2">Phosphorylated. Phosphorylation promotes DNA-binding activity.</text>
</comment>
<comment type="PTM">
    <text evidence="2">Acetylated.</text>
</comment>
<comment type="disruption phenotype">
    <text evidence="5 7">Knockout NUPR1 mice are viable and seem normal. Mouse embryonic fibroblast grown more rapidly compared to wild type (PubMed:11896600). Knockout NUPR1 mice are fertile. However female present a delay in female sexual maturation and male develop a phenotype similar to Sertoli-cell-only syndrome (SCOS) (PubMed:18495683).</text>
</comment>
<comment type="similarity">
    <text evidence="14">Belongs to the NUPR family.</text>
</comment>
<dbReference type="EMBL" id="AF131195">
    <property type="protein sequence ID" value="AAD41784.1"/>
    <property type="molecule type" value="Genomic_DNA"/>
</dbReference>
<dbReference type="EMBL" id="AF131196">
    <property type="protein sequence ID" value="AAD41785.1"/>
    <property type="molecule type" value="mRNA"/>
</dbReference>
<dbReference type="EMBL" id="AK009572">
    <property type="protein sequence ID" value="BAB26369.1"/>
    <property type="molecule type" value="mRNA"/>
</dbReference>
<dbReference type="EMBL" id="BC002109">
    <property type="protein sequence ID" value="AAH02109.1"/>
    <property type="molecule type" value="mRNA"/>
</dbReference>
<dbReference type="CCDS" id="CCDS40127.1"/>
<dbReference type="RefSeq" id="NP_062712.1">
    <property type="nucleotide sequence ID" value="NM_019738.1"/>
</dbReference>
<dbReference type="BioGRID" id="207894">
    <property type="interactions" value="3"/>
</dbReference>
<dbReference type="FunCoup" id="Q9WTK0">
    <property type="interactions" value="175"/>
</dbReference>
<dbReference type="STRING" id="10090.ENSMUSP00000032961"/>
<dbReference type="PhosphoSitePlus" id="Q9WTK0"/>
<dbReference type="PaxDb" id="10090-ENSMUSP00000032961"/>
<dbReference type="ProteomicsDB" id="293908"/>
<dbReference type="Pumba" id="Q9WTK0"/>
<dbReference type="Antibodypedia" id="13028">
    <property type="antibodies" value="151 antibodies from 26 providers"/>
</dbReference>
<dbReference type="DNASU" id="56312"/>
<dbReference type="Ensembl" id="ENSMUST00000032961.4">
    <property type="protein sequence ID" value="ENSMUSP00000032961.4"/>
    <property type="gene ID" value="ENSMUSG00000030717.10"/>
</dbReference>
<dbReference type="GeneID" id="56312"/>
<dbReference type="KEGG" id="mmu:56312"/>
<dbReference type="UCSC" id="uc009jsd.1">
    <property type="organism name" value="mouse"/>
</dbReference>
<dbReference type="AGR" id="MGI:1891834"/>
<dbReference type="CTD" id="26471"/>
<dbReference type="MGI" id="MGI:1891834">
    <property type="gene designation" value="Nupr1"/>
</dbReference>
<dbReference type="VEuPathDB" id="HostDB:ENSMUSG00000030717"/>
<dbReference type="eggNOG" id="KOG4319">
    <property type="taxonomic scope" value="Eukaryota"/>
</dbReference>
<dbReference type="GeneTree" id="ENSGT00530000064242"/>
<dbReference type="HOGENOM" id="CLU_180450_1_0_1"/>
<dbReference type="InParanoid" id="Q9WTK0"/>
<dbReference type="OMA" id="EAFFDEY"/>
<dbReference type="OrthoDB" id="10030453at2759"/>
<dbReference type="PhylomeDB" id="Q9WTK0"/>
<dbReference type="TreeFam" id="TF324649"/>
<dbReference type="BioGRID-ORCS" id="56312">
    <property type="hits" value="2 hits in 76 CRISPR screens"/>
</dbReference>
<dbReference type="ChiTaRS" id="Nupr1">
    <property type="organism name" value="mouse"/>
</dbReference>
<dbReference type="PRO" id="PR:Q9WTK0"/>
<dbReference type="Proteomes" id="UP000000589">
    <property type="component" value="Chromosome 7"/>
</dbReference>
<dbReference type="RNAct" id="Q9WTK0">
    <property type="molecule type" value="protein"/>
</dbReference>
<dbReference type="Bgee" id="ENSMUSG00000030717">
    <property type="expression patterns" value="Expressed in submandibular gland and 217 other cell types or tissues"/>
</dbReference>
<dbReference type="ExpressionAtlas" id="Q9WTK0">
    <property type="expression patterns" value="baseline and differential"/>
</dbReference>
<dbReference type="GO" id="GO:0005737">
    <property type="term" value="C:cytoplasm"/>
    <property type="evidence" value="ECO:0000250"/>
    <property type="project" value="UniProtKB"/>
</dbReference>
<dbReference type="GO" id="GO:0045171">
    <property type="term" value="C:intercellular bridge"/>
    <property type="evidence" value="ECO:0007669"/>
    <property type="project" value="Ensembl"/>
</dbReference>
<dbReference type="GO" id="GO:0005654">
    <property type="term" value="C:nucleoplasm"/>
    <property type="evidence" value="ECO:0007669"/>
    <property type="project" value="Ensembl"/>
</dbReference>
<dbReference type="GO" id="GO:0005634">
    <property type="term" value="C:nucleus"/>
    <property type="evidence" value="ECO:0000250"/>
    <property type="project" value="UniProtKB"/>
</dbReference>
<dbReference type="GO" id="GO:0048471">
    <property type="term" value="C:perinuclear region of cytoplasm"/>
    <property type="evidence" value="ECO:0000250"/>
    <property type="project" value="UniProtKB"/>
</dbReference>
<dbReference type="GO" id="GO:0032993">
    <property type="term" value="C:protein-DNA complex"/>
    <property type="evidence" value="ECO:0007669"/>
    <property type="project" value="Ensembl"/>
</dbReference>
<dbReference type="GO" id="GO:0010698">
    <property type="term" value="F:acetyltransferase activator activity"/>
    <property type="evidence" value="ECO:0000315"/>
    <property type="project" value="UniProtKB"/>
</dbReference>
<dbReference type="GO" id="GO:0003682">
    <property type="term" value="F:chromatin binding"/>
    <property type="evidence" value="ECO:0000314"/>
    <property type="project" value="MGI"/>
</dbReference>
<dbReference type="GO" id="GO:0003677">
    <property type="term" value="F:DNA binding"/>
    <property type="evidence" value="ECO:0000250"/>
    <property type="project" value="UniProtKB"/>
</dbReference>
<dbReference type="GO" id="GO:0003713">
    <property type="term" value="F:transcription coactivator activity"/>
    <property type="evidence" value="ECO:0000250"/>
    <property type="project" value="UniProtKB"/>
</dbReference>
<dbReference type="GO" id="GO:0002526">
    <property type="term" value="P:acute inflammatory response"/>
    <property type="evidence" value="ECO:0000315"/>
    <property type="project" value="MGI"/>
</dbReference>
<dbReference type="GO" id="GO:0044346">
    <property type="term" value="P:fibroblast apoptotic process"/>
    <property type="evidence" value="ECO:0000315"/>
    <property type="project" value="MGI"/>
</dbReference>
<dbReference type="GO" id="GO:0048144">
    <property type="term" value="P:fibroblast proliferation"/>
    <property type="evidence" value="ECO:0000315"/>
    <property type="project" value="MGI"/>
</dbReference>
<dbReference type="GO" id="GO:0042771">
    <property type="term" value="P:intrinsic apoptotic signaling pathway in response to DNA damage by p53 class mediator"/>
    <property type="evidence" value="ECO:0000315"/>
    <property type="project" value="MGI"/>
</dbReference>
<dbReference type="GO" id="GO:0008584">
    <property type="term" value="P:male gonad development"/>
    <property type="evidence" value="ECO:0000315"/>
    <property type="project" value="MGI"/>
</dbReference>
<dbReference type="GO" id="GO:0043066">
    <property type="term" value="P:negative regulation of apoptotic process"/>
    <property type="evidence" value="ECO:0000250"/>
    <property type="project" value="UniProtKB"/>
</dbReference>
<dbReference type="GO" id="GO:1902902">
    <property type="term" value="P:negative regulation of autophagosome assembly"/>
    <property type="evidence" value="ECO:0000250"/>
    <property type="project" value="UniProtKB"/>
</dbReference>
<dbReference type="GO" id="GO:0010507">
    <property type="term" value="P:negative regulation of autophagy"/>
    <property type="evidence" value="ECO:0000315"/>
    <property type="project" value="UniProtKB"/>
</dbReference>
<dbReference type="GO" id="GO:0010667">
    <property type="term" value="P:negative regulation of cardiac muscle cell apoptotic process"/>
    <property type="evidence" value="ECO:0000250"/>
    <property type="project" value="UniProtKB"/>
</dbReference>
<dbReference type="GO" id="GO:0045786">
    <property type="term" value="P:negative regulation of cell cycle"/>
    <property type="evidence" value="ECO:0000315"/>
    <property type="project" value="MGI"/>
</dbReference>
<dbReference type="GO" id="GO:0043433">
    <property type="term" value="P:negative regulation of DNA-binding transcription factor activity"/>
    <property type="evidence" value="ECO:0000250"/>
    <property type="project" value="UniProtKB"/>
</dbReference>
<dbReference type="GO" id="GO:1904036">
    <property type="term" value="P:negative regulation of epithelial cell apoptotic process"/>
    <property type="evidence" value="ECO:0000315"/>
    <property type="project" value="UniProtKB"/>
</dbReference>
<dbReference type="GO" id="GO:0050680">
    <property type="term" value="P:negative regulation of epithelial cell proliferation"/>
    <property type="evidence" value="ECO:0000315"/>
    <property type="project" value="UniProtKB"/>
</dbReference>
<dbReference type="GO" id="GO:0048147">
    <property type="term" value="P:negative regulation of fibroblast proliferation"/>
    <property type="evidence" value="ECO:0000315"/>
    <property type="project" value="MGI"/>
</dbReference>
<dbReference type="GO" id="GO:0045820">
    <property type="term" value="P:negative regulation of glycolytic process"/>
    <property type="evidence" value="ECO:0000250"/>
    <property type="project" value="UniProtKB"/>
</dbReference>
<dbReference type="GO" id="GO:0062099">
    <property type="term" value="P:negative regulation of programmed necrotic cell death"/>
    <property type="evidence" value="ECO:0000250"/>
    <property type="project" value="UniProtKB"/>
</dbReference>
<dbReference type="GO" id="GO:1904691">
    <property type="term" value="P:negative regulation of type B pancreatic cell proliferation"/>
    <property type="evidence" value="ECO:0000315"/>
    <property type="project" value="UniProtKB"/>
</dbReference>
<dbReference type="GO" id="GO:0045787">
    <property type="term" value="P:positive regulation of cell cycle"/>
    <property type="evidence" value="ECO:0007669"/>
    <property type="project" value="Ensembl"/>
</dbReference>
<dbReference type="GO" id="GO:2000271">
    <property type="term" value="P:positive regulation of fibroblast apoptotic process"/>
    <property type="evidence" value="ECO:0000315"/>
    <property type="project" value="MGI"/>
</dbReference>
<dbReference type="GO" id="GO:2001244">
    <property type="term" value="P:positive regulation of intrinsic apoptotic signaling pathway"/>
    <property type="evidence" value="ECO:0000250"/>
    <property type="project" value="UniProtKB"/>
</dbReference>
<dbReference type="GO" id="GO:0150078">
    <property type="term" value="P:positive regulation of neuroinflammatory response"/>
    <property type="evidence" value="ECO:0000315"/>
    <property type="project" value="UniProtKB"/>
</dbReference>
<dbReference type="GO" id="GO:0043525">
    <property type="term" value="P:positive regulation of neuron apoptotic process"/>
    <property type="evidence" value="ECO:0000250"/>
    <property type="project" value="UniProtKB"/>
</dbReference>
<dbReference type="GO" id="GO:1903862">
    <property type="term" value="P:positive regulation of oxidative phosphorylation"/>
    <property type="evidence" value="ECO:0000250"/>
    <property type="project" value="UniProtKB"/>
</dbReference>
<dbReference type="GO" id="GO:1901800">
    <property type="term" value="P:positive regulation of proteasomal protein catabolic process"/>
    <property type="evidence" value="ECO:0000250"/>
    <property type="project" value="UniProtKB"/>
</dbReference>
<dbReference type="GO" id="GO:0065003">
    <property type="term" value="P:protein-containing complex assembly"/>
    <property type="evidence" value="ECO:0000315"/>
    <property type="project" value="MGI"/>
</dbReference>
<dbReference type="GO" id="GO:0010506">
    <property type="term" value="P:regulation of autophagy"/>
    <property type="evidence" value="ECO:0000250"/>
    <property type="project" value="UniProtKB"/>
</dbReference>
<dbReference type="GO" id="GO:2000194">
    <property type="term" value="P:regulation of female gonad development"/>
    <property type="evidence" value="ECO:0000315"/>
    <property type="project" value="MGI"/>
</dbReference>
<dbReference type="GO" id="GO:1905897">
    <property type="term" value="P:regulation of response to endoplasmic reticulum stress"/>
    <property type="evidence" value="ECO:0000250"/>
    <property type="project" value="UniProtKB"/>
</dbReference>
<dbReference type="GO" id="GO:0009636">
    <property type="term" value="P:response to toxic substance"/>
    <property type="evidence" value="ECO:0000315"/>
    <property type="project" value="MGI"/>
</dbReference>
<dbReference type="GO" id="GO:0035914">
    <property type="term" value="P:skeletal muscle cell differentiation"/>
    <property type="evidence" value="ECO:0000315"/>
    <property type="project" value="MGI"/>
</dbReference>
<dbReference type="InterPro" id="IPR018792">
    <property type="entry name" value="NUPR1-like"/>
</dbReference>
<dbReference type="PANTHER" id="PTHR17149:SF5">
    <property type="entry name" value="NUCLEAR PROTEIN 1"/>
    <property type="match status" value="1"/>
</dbReference>
<dbReference type="PANTHER" id="PTHR17149">
    <property type="entry name" value="NUCLEAR PROTEIN 1 AND 2"/>
    <property type="match status" value="1"/>
</dbReference>
<dbReference type="Pfam" id="PF10195">
    <property type="entry name" value="Phospho_p8"/>
    <property type="match status" value="1"/>
</dbReference>
<sequence length="80" mass="8901">MATLPPTANPSQQPLNLEDEDGILDEYDQYSLAHPCVVGGGRKGRTKREAAANTNRPSPGGHERKLLTKFQNSERKKAWR</sequence>
<proteinExistence type="evidence at protein level"/>
<reference key="1">
    <citation type="submission" date="1999-02" db="EMBL/GenBank/DDBJ databases">
        <title>Structural and functional characterization of the mouse p8 gene: promotion of transcription by the C/EBPa and C/EBPb trans-acting factors involves a C/EBP cis-acting element and other regions of the promoter.</title>
        <authorList>
            <person name="Vasseur S."/>
            <person name="Mallo G.V."/>
            <person name="Garcia-Montero A."/>
            <person name="Ortiz E.M."/>
            <person name="Fiedler F."/>
            <person name="Moreno S."/>
            <person name="Iovanna J.L."/>
        </authorList>
    </citation>
    <scope>NUCLEOTIDE SEQUENCE</scope>
</reference>
<reference key="2">
    <citation type="journal article" date="2005" name="Science">
        <title>The transcriptional landscape of the mammalian genome.</title>
        <authorList>
            <person name="Carninci P."/>
            <person name="Kasukawa T."/>
            <person name="Katayama S."/>
            <person name="Gough J."/>
            <person name="Frith M.C."/>
            <person name="Maeda N."/>
            <person name="Oyama R."/>
            <person name="Ravasi T."/>
            <person name="Lenhard B."/>
            <person name="Wells C."/>
            <person name="Kodzius R."/>
            <person name="Shimokawa K."/>
            <person name="Bajic V.B."/>
            <person name="Brenner S.E."/>
            <person name="Batalov S."/>
            <person name="Forrest A.R."/>
            <person name="Zavolan M."/>
            <person name="Davis M.J."/>
            <person name="Wilming L.G."/>
            <person name="Aidinis V."/>
            <person name="Allen J.E."/>
            <person name="Ambesi-Impiombato A."/>
            <person name="Apweiler R."/>
            <person name="Aturaliya R.N."/>
            <person name="Bailey T.L."/>
            <person name="Bansal M."/>
            <person name="Baxter L."/>
            <person name="Beisel K.W."/>
            <person name="Bersano T."/>
            <person name="Bono H."/>
            <person name="Chalk A.M."/>
            <person name="Chiu K.P."/>
            <person name="Choudhary V."/>
            <person name="Christoffels A."/>
            <person name="Clutterbuck D.R."/>
            <person name="Crowe M.L."/>
            <person name="Dalla E."/>
            <person name="Dalrymple B.P."/>
            <person name="de Bono B."/>
            <person name="Della Gatta G."/>
            <person name="di Bernardo D."/>
            <person name="Down T."/>
            <person name="Engstrom P."/>
            <person name="Fagiolini M."/>
            <person name="Faulkner G."/>
            <person name="Fletcher C.F."/>
            <person name="Fukushima T."/>
            <person name="Furuno M."/>
            <person name="Futaki S."/>
            <person name="Gariboldi M."/>
            <person name="Georgii-Hemming P."/>
            <person name="Gingeras T.R."/>
            <person name="Gojobori T."/>
            <person name="Green R.E."/>
            <person name="Gustincich S."/>
            <person name="Harbers M."/>
            <person name="Hayashi Y."/>
            <person name="Hensch T.K."/>
            <person name="Hirokawa N."/>
            <person name="Hill D."/>
            <person name="Huminiecki L."/>
            <person name="Iacono M."/>
            <person name="Ikeo K."/>
            <person name="Iwama A."/>
            <person name="Ishikawa T."/>
            <person name="Jakt M."/>
            <person name="Kanapin A."/>
            <person name="Katoh M."/>
            <person name="Kawasawa Y."/>
            <person name="Kelso J."/>
            <person name="Kitamura H."/>
            <person name="Kitano H."/>
            <person name="Kollias G."/>
            <person name="Krishnan S.P."/>
            <person name="Kruger A."/>
            <person name="Kummerfeld S.K."/>
            <person name="Kurochkin I.V."/>
            <person name="Lareau L.F."/>
            <person name="Lazarevic D."/>
            <person name="Lipovich L."/>
            <person name="Liu J."/>
            <person name="Liuni S."/>
            <person name="McWilliam S."/>
            <person name="Madan Babu M."/>
            <person name="Madera M."/>
            <person name="Marchionni L."/>
            <person name="Matsuda H."/>
            <person name="Matsuzawa S."/>
            <person name="Miki H."/>
            <person name="Mignone F."/>
            <person name="Miyake S."/>
            <person name="Morris K."/>
            <person name="Mottagui-Tabar S."/>
            <person name="Mulder N."/>
            <person name="Nakano N."/>
            <person name="Nakauchi H."/>
            <person name="Ng P."/>
            <person name="Nilsson R."/>
            <person name="Nishiguchi S."/>
            <person name="Nishikawa S."/>
            <person name="Nori F."/>
            <person name="Ohara O."/>
            <person name="Okazaki Y."/>
            <person name="Orlando V."/>
            <person name="Pang K.C."/>
            <person name="Pavan W.J."/>
            <person name="Pavesi G."/>
            <person name="Pesole G."/>
            <person name="Petrovsky N."/>
            <person name="Piazza S."/>
            <person name="Reed J."/>
            <person name="Reid J.F."/>
            <person name="Ring B.Z."/>
            <person name="Ringwald M."/>
            <person name="Rost B."/>
            <person name="Ruan Y."/>
            <person name="Salzberg S.L."/>
            <person name="Sandelin A."/>
            <person name="Schneider C."/>
            <person name="Schoenbach C."/>
            <person name="Sekiguchi K."/>
            <person name="Semple C.A."/>
            <person name="Seno S."/>
            <person name="Sessa L."/>
            <person name="Sheng Y."/>
            <person name="Shibata Y."/>
            <person name="Shimada H."/>
            <person name="Shimada K."/>
            <person name="Silva D."/>
            <person name="Sinclair B."/>
            <person name="Sperling S."/>
            <person name="Stupka E."/>
            <person name="Sugiura K."/>
            <person name="Sultana R."/>
            <person name="Takenaka Y."/>
            <person name="Taki K."/>
            <person name="Tammoja K."/>
            <person name="Tan S.L."/>
            <person name="Tang S."/>
            <person name="Taylor M.S."/>
            <person name="Tegner J."/>
            <person name="Teichmann S.A."/>
            <person name="Ueda H.R."/>
            <person name="van Nimwegen E."/>
            <person name="Verardo R."/>
            <person name="Wei C.L."/>
            <person name="Yagi K."/>
            <person name="Yamanishi H."/>
            <person name="Zabarovsky E."/>
            <person name="Zhu S."/>
            <person name="Zimmer A."/>
            <person name="Hide W."/>
            <person name="Bult C."/>
            <person name="Grimmond S.M."/>
            <person name="Teasdale R.D."/>
            <person name="Liu E.T."/>
            <person name="Brusic V."/>
            <person name="Quackenbush J."/>
            <person name="Wahlestedt C."/>
            <person name="Mattick J.S."/>
            <person name="Hume D.A."/>
            <person name="Kai C."/>
            <person name="Sasaki D."/>
            <person name="Tomaru Y."/>
            <person name="Fukuda S."/>
            <person name="Kanamori-Katayama M."/>
            <person name="Suzuki M."/>
            <person name="Aoki J."/>
            <person name="Arakawa T."/>
            <person name="Iida J."/>
            <person name="Imamura K."/>
            <person name="Itoh M."/>
            <person name="Kato T."/>
            <person name="Kawaji H."/>
            <person name="Kawagashira N."/>
            <person name="Kawashima T."/>
            <person name="Kojima M."/>
            <person name="Kondo S."/>
            <person name="Konno H."/>
            <person name="Nakano K."/>
            <person name="Ninomiya N."/>
            <person name="Nishio T."/>
            <person name="Okada M."/>
            <person name="Plessy C."/>
            <person name="Shibata K."/>
            <person name="Shiraki T."/>
            <person name="Suzuki S."/>
            <person name="Tagami M."/>
            <person name="Waki K."/>
            <person name="Watahiki A."/>
            <person name="Okamura-Oho Y."/>
            <person name="Suzuki H."/>
            <person name="Kawai J."/>
            <person name="Hayashizaki Y."/>
        </authorList>
    </citation>
    <scope>NUCLEOTIDE SEQUENCE [LARGE SCALE MRNA]</scope>
    <source>
        <strain>C57BL/6J</strain>
        <tissue>Tongue</tissue>
    </source>
</reference>
<reference key="3">
    <citation type="journal article" date="2004" name="Genome Res.">
        <title>The status, quality, and expansion of the NIH full-length cDNA project: the Mammalian Gene Collection (MGC).</title>
        <authorList>
            <consortium name="The MGC Project Team"/>
        </authorList>
    </citation>
    <scope>NUCLEOTIDE SEQUENCE [LARGE SCALE MRNA]</scope>
</reference>
<reference key="4">
    <citation type="journal article" date="2002" name="Oncogene">
        <title>p8-deficient fibroblasts grow more rapidly and are more resistant to adriamycin-induced apoptosis.</title>
        <authorList>
            <person name="Vasseur S."/>
            <person name="Hoffmeister A."/>
            <person name="Garcia-Montero A."/>
            <person name="Mallo G.V."/>
            <person name="Feil R."/>
            <person name="Kuehbandner S."/>
            <person name="Dagorn J.C."/>
            <person name="Iovanna J.L."/>
        </authorList>
    </citation>
    <scope>DISRUPTION PHENOTYPE</scope>
    <scope>INDUCTION</scope>
    <scope>FUNCTION</scope>
</reference>
<reference key="5">
    <citation type="journal article" date="2006" name="Glia">
        <title>Upregulation of the stress-associated gene p8 in mouse models of demyelination and in multiple sclerosis tissues.</title>
        <authorList>
            <person name="Plant S.R."/>
            <person name="Wang Y."/>
            <person name="Vasseur S."/>
            <person name="Thrash J.C."/>
            <person name="McMahon E.J."/>
            <person name="Bergstralh D.T."/>
            <person name="Arnett H.A."/>
            <person name="Miller S.D."/>
            <person name="Carson M.J."/>
            <person name="Iovanna J.L."/>
            <person name="Ting J.P."/>
        </authorList>
    </citation>
    <scope>INDUCTION</scope>
    <scope>FUNCTION</scope>
    <scope>DEVELOPMENTAL STAGE</scope>
</reference>
<reference key="6">
    <citation type="journal article" date="2008" name="Biol. Reprod.">
        <title>Loss of the protein NUPR1 (p8) leads to delayed LHB expression, delayed ovarian maturation, and testicular development of a sertoli-cell-only syndrome-like phenotype in mice.</title>
        <authorList>
            <person name="Million Passe C.M."/>
            <person name="White C.R."/>
            <person name="King M.W."/>
            <person name="Quirk P.L."/>
            <person name="Iovanna J.L."/>
            <person name="Quirk C.C."/>
        </authorList>
    </citation>
    <scope>DISRUPTION PHENOTYPE</scope>
    <scope>TISSUE SPECIFICITY</scope>
    <scope>FUNCTION</scope>
</reference>
<reference key="7">
    <citation type="journal article" date="2009" name="J. Cell Sci.">
        <title>The small chromatin-binding protein p8 coordinates the association of anti-proliferative and pro-myogenic proteins at the myogenin promoter.</title>
        <authorList>
            <person name="Sambasivan R."/>
            <person name="Cheedipudi S."/>
            <person name="Pasupuleti N."/>
            <person name="Saleh A."/>
            <person name="Pavlath G.K."/>
            <person name="Dhawan J."/>
        </authorList>
    </citation>
    <scope>INDUCTION</scope>
    <scope>FUNCTION</scope>
    <scope>INTERACTION WITH MYOD1; EP300 AND DDX5</scope>
</reference>
<reference key="8">
    <citation type="journal article" date="2010" name="Mol. Biol. Cell">
        <title>Deficiency of the transcriptional regulator p8 results in increased autophagy and apoptosis, and causes impaired heart function.</title>
        <authorList>
            <person name="Kong D.K."/>
            <person name="Georgescu S.P."/>
            <person name="Cano C."/>
            <person name="Aronovitz M.J."/>
            <person name="Iovanna J.L."/>
            <person name="Patten R.D."/>
            <person name="Kyriakis J.M."/>
            <person name="Goruppi S."/>
        </authorList>
    </citation>
    <scope>FUNCTION</scope>
</reference>
<reference key="9">
    <citation type="journal article" date="2012" name="J. Clin. Invest.">
        <title>Nuclear protein 1 promotes pancreatic cancer development and protects cells from stress by inhibiting apoptosis.</title>
        <authorList>
            <person name="Hamidi T."/>
            <person name="Algul H."/>
            <person name="Cano C.E."/>
            <person name="Sandi M.J."/>
            <person name="Molejon M.I."/>
            <person name="Riemann M."/>
            <person name="Calvo E.L."/>
            <person name="Lomberk G."/>
            <person name="Dagorn J.C."/>
            <person name="Weih F."/>
            <person name="Urrutia R."/>
            <person name="Schmid R.M."/>
            <person name="Iovanna J.L."/>
        </authorList>
    </citation>
    <scope>FUNCTION</scope>
</reference>
<reference key="10">
    <citation type="journal article" date="2013" name="Diabetologia">
        <title>Nupr1 deletion protects against glucose intolerance by increasing beta cell mass.</title>
        <authorList>
            <person name="Barbosa-Sampaio H.C."/>
            <person name="Liu B."/>
            <person name="Drynda R."/>
            <person name="Rodriguez de Ledesma A.M."/>
            <person name="King A.J."/>
            <person name="Bowe J.E."/>
            <person name="Malicet C."/>
            <person name="Iovanna J.L."/>
            <person name="Jones P.M."/>
            <person name="Persaud S.J."/>
            <person name="Muller D.S."/>
        </authorList>
    </citation>
    <scope>FUNCTION</scope>
</reference>
<reference key="11">
    <citation type="journal article" date="2017" name="J. Am. Soc. Nephrol.">
        <title>Stress Response Gene Nupr1 Alleviates Cyclosporin A Nephrotoxicity In Vivo.</title>
        <authorList>
            <person name="Galichon P."/>
            <person name="Bataille A."/>
            <person name="Vandermeersch S."/>
            <person name="Wetzstein M."/>
            <person name="Xu-Dubois Y.C."/>
            <person name="Legouis D."/>
            <person name="Hertig A."/>
            <person name="Buob D."/>
            <person name="Placier S."/>
            <person name="Bige N."/>
            <person name="Lefevre G."/>
            <person name="Jouanneau C."/>
            <person name="Martin C."/>
            <person name="Iovanna J.L."/>
            <person name="Rondeau E."/>
        </authorList>
    </citation>
    <scope>FUNCTION</scope>
</reference>
<protein>
    <recommendedName>
        <fullName evidence="14">Nuclear protein 1</fullName>
    </recommendedName>
    <alternativeName>
        <fullName evidence="13">Protein p8</fullName>
    </alternativeName>
</protein>
<name>NUPR1_MOUSE</name>
<gene>
    <name evidence="15" type="primary">Nupr1</name>
</gene>
<evidence type="ECO:0000250" key="1">
    <source>
        <dbReference type="UniProtKB" id="O54842"/>
    </source>
</evidence>
<evidence type="ECO:0000250" key="2">
    <source>
        <dbReference type="UniProtKB" id="O60356"/>
    </source>
</evidence>
<evidence type="ECO:0000255" key="3"/>
<evidence type="ECO:0000256" key="4">
    <source>
        <dbReference type="SAM" id="MobiDB-lite"/>
    </source>
</evidence>
<evidence type="ECO:0000269" key="5">
    <source>
    </source>
</evidence>
<evidence type="ECO:0000269" key="6">
    <source>
    </source>
</evidence>
<evidence type="ECO:0000269" key="7">
    <source>
    </source>
</evidence>
<evidence type="ECO:0000269" key="8">
    <source>
    </source>
</evidence>
<evidence type="ECO:0000269" key="9">
    <source>
    </source>
</evidence>
<evidence type="ECO:0000269" key="10">
    <source>
    </source>
</evidence>
<evidence type="ECO:0000269" key="11">
    <source>
    </source>
</evidence>
<evidence type="ECO:0000269" key="12">
    <source>
    </source>
</evidence>
<evidence type="ECO:0000303" key="13">
    <source ref="1"/>
</evidence>
<evidence type="ECO:0000305" key="14"/>
<evidence type="ECO:0000312" key="15">
    <source>
        <dbReference type="MGI" id="MGI:1891834"/>
    </source>
</evidence>
<feature type="chain" id="PRO_0000058008" description="Nuclear protein 1">
    <location>
        <begin position="1"/>
        <end position="80"/>
    </location>
</feature>
<feature type="region of interest" description="Disordered" evidence="4">
    <location>
        <begin position="1"/>
        <end position="21"/>
    </location>
</feature>
<feature type="region of interest" description="Disordered" evidence="4">
    <location>
        <begin position="38"/>
        <end position="80"/>
    </location>
</feature>
<feature type="short sequence motif" description="Nuclear localization signal" evidence="3">
    <location>
        <begin position="64"/>
        <end position="80"/>
    </location>
</feature>
<feature type="compositionally biased region" description="Basic and acidic residues" evidence="4">
    <location>
        <begin position="61"/>
        <end position="80"/>
    </location>
</feature>
<feature type="sequence conflict" description="In Ref. 2; BAB26369." evidence="14" ref="2">
    <original>G</original>
    <variation>V</variation>
    <location>
        <position position="41"/>
    </location>
</feature>
<organism>
    <name type="scientific">Mus musculus</name>
    <name type="common">Mouse</name>
    <dbReference type="NCBI Taxonomy" id="10090"/>
    <lineage>
        <taxon>Eukaryota</taxon>
        <taxon>Metazoa</taxon>
        <taxon>Chordata</taxon>
        <taxon>Craniata</taxon>
        <taxon>Vertebrata</taxon>
        <taxon>Euteleostomi</taxon>
        <taxon>Mammalia</taxon>
        <taxon>Eutheria</taxon>
        <taxon>Euarchontoglires</taxon>
        <taxon>Glires</taxon>
        <taxon>Rodentia</taxon>
        <taxon>Myomorpha</taxon>
        <taxon>Muroidea</taxon>
        <taxon>Muridae</taxon>
        <taxon>Murinae</taxon>
        <taxon>Mus</taxon>
        <taxon>Mus</taxon>
    </lineage>
</organism>
<keyword id="KW-0010">Activator</keyword>
<keyword id="KW-0963">Cytoplasm</keyword>
<keyword id="KW-0238">DNA-binding</keyword>
<keyword id="KW-0539">Nucleus</keyword>
<keyword id="KW-0597">Phosphoprotein</keyword>
<keyword id="KW-1185">Reference proteome</keyword>
<keyword id="KW-0804">Transcription</keyword>
<keyword id="KW-0805">Transcription regulation</keyword>
<accession>Q9WTK0</accession>
<accession>Q9D756</accession>